<dbReference type="EC" id="1.7.99.1" evidence="1"/>
<dbReference type="EMBL" id="CP000305">
    <property type="protein sequence ID" value="ABG18949.1"/>
    <property type="molecule type" value="Genomic_DNA"/>
</dbReference>
<dbReference type="EMBL" id="ACNQ01000017">
    <property type="protein sequence ID" value="EEO75070.1"/>
    <property type="molecule type" value="Genomic_DNA"/>
</dbReference>
<dbReference type="RefSeq" id="WP_002211359.1">
    <property type="nucleotide sequence ID" value="NZ_ACNQ01000017.1"/>
</dbReference>
<dbReference type="SMR" id="Q1CGD1"/>
<dbReference type="GeneID" id="57977156"/>
<dbReference type="KEGG" id="ypn:YPN_2621"/>
<dbReference type="HOGENOM" id="CLU_038344_2_0_6"/>
<dbReference type="Proteomes" id="UP000008936">
    <property type="component" value="Chromosome"/>
</dbReference>
<dbReference type="GO" id="GO:0005737">
    <property type="term" value="C:cytoplasm"/>
    <property type="evidence" value="ECO:0007669"/>
    <property type="project" value="UniProtKB-SubCell"/>
</dbReference>
<dbReference type="GO" id="GO:0051537">
    <property type="term" value="F:2 iron, 2 sulfur cluster binding"/>
    <property type="evidence" value="ECO:0007669"/>
    <property type="project" value="UniProtKB-KW"/>
</dbReference>
<dbReference type="GO" id="GO:0050418">
    <property type="term" value="F:hydroxylamine reductase activity"/>
    <property type="evidence" value="ECO:0007669"/>
    <property type="project" value="UniProtKB-UniRule"/>
</dbReference>
<dbReference type="GO" id="GO:0046872">
    <property type="term" value="F:metal ion binding"/>
    <property type="evidence" value="ECO:0007669"/>
    <property type="project" value="UniProtKB-KW"/>
</dbReference>
<dbReference type="GO" id="GO:0004601">
    <property type="term" value="F:peroxidase activity"/>
    <property type="evidence" value="ECO:0007669"/>
    <property type="project" value="TreeGrafter"/>
</dbReference>
<dbReference type="GO" id="GO:0042542">
    <property type="term" value="P:response to hydrogen peroxide"/>
    <property type="evidence" value="ECO:0007669"/>
    <property type="project" value="TreeGrafter"/>
</dbReference>
<dbReference type="CDD" id="cd01914">
    <property type="entry name" value="HCP"/>
    <property type="match status" value="1"/>
</dbReference>
<dbReference type="FunFam" id="1.20.1270.20:FF:000001">
    <property type="entry name" value="Hydroxylamine reductase"/>
    <property type="match status" value="1"/>
</dbReference>
<dbReference type="FunFam" id="1.20.1270.20:FF:000002">
    <property type="entry name" value="Hydroxylamine reductase"/>
    <property type="match status" value="1"/>
</dbReference>
<dbReference type="FunFam" id="3.40.50.2030:FF:000001">
    <property type="entry name" value="Hydroxylamine reductase"/>
    <property type="match status" value="1"/>
</dbReference>
<dbReference type="FunFam" id="3.40.50.2030:FF:000002">
    <property type="entry name" value="Hydroxylamine reductase"/>
    <property type="match status" value="1"/>
</dbReference>
<dbReference type="Gene3D" id="1.20.1270.20">
    <property type="match status" value="2"/>
</dbReference>
<dbReference type="Gene3D" id="3.40.50.2030">
    <property type="match status" value="2"/>
</dbReference>
<dbReference type="HAMAP" id="MF_00069">
    <property type="entry name" value="Hydroxylam_reduct"/>
    <property type="match status" value="1"/>
</dbReference>
<dbReference type="InterPro" id="IPR004137">
    <property type="entry name" value="HCP/CODH"/>
</dbReference>
<dbReference type="InterPro" id="IPR010048">
    <property type="entry name" value="Hydroxylam_reduct"/>
</dbReference>
<dbReference type="InterPro" id="IPR016099">
    <property type="entry name" value="Prismane-like_a/b-sand"/>
</dbReference>
<dbReference type="InterPro" id="IPR011254">
    <property type="entry name" value="Prismane-like_sf"/>
</dbReference>
<dbReference type="InterPro" id="IPR016100">
    <property type="entry name" value="Prismane_a-bundle"/>
</dbReference>
<dbReference type="NCBIfam" id="TIGR01703">
    <property type="entry name" value="hybrid_clust"/>
    <property type="match status" value="1"/>
</dbReference>
<dbReference type="NCBIfam" id="NF003658">
    <property type="entry name" value="PRK05290.1"/>
    <property type="match status" value="1"/>
</dbReference>
<dbReference type="PANTHER" id="PTHR30109">
    <property type="entry name" value="HYDROXYLAMINE REDUCTASE"/>
    <property type="match status" value="1"/>
</dbReference>
<dbReference type="PANTHER" id="PTHR30109:SF0">
    <property type="entry name" value="HYDROXYLAMINE REDUCTASE"/>
    <property type="match status" value="1"/>
</dbReference>
<dbReference type="Pfam" id="PF03063">
    <property type="entry name" value="Prismane"/>
    <property type="match status" value="1"/>
</dbReference>
<dbReference type="PIRSF" id="PIRSF000076">
    <property type="entry name" value="HCP"/>
    <property type="match status" value="1"/>
</dbReference>
<dbReference type="SUPFAM" id="SSF56821">
    <property type="entry name" value="Prismane protein-like"/>
    <property type="match status" value="1"/>
</dbReference>
<reference key="1">
    <citation type="journal article" date="2006" name="J. Bacteriol.">
        <title>Complete genome sequence of Yersinia pestis strains Antiqua and Nepal516: evidence of gene reduction in an emerging pathogen.</title>
        <authorList>
            <person name="Chain P.S.G."/>
            <person name="Hu P."/>
            <person name="Malfatti S.A."/>
            <person name="Radnedge L."/>
            <person name="Larimer F."/>
            <person name="Vergez L.M."/>
            <person name="Worsham P."/>
            <person name="Chu M.C."/>
            <person name="Andersen G.L."/>
        </authorList>
    </citation>
    <scope>NUCLEOTIDE SEQUENCE [LARGE SCALE GENOMIC DNA]</scope>
    <source>
        <strain>Nepal516</strain>
    </source>
</reference>
<reference key="2">
    <citation type="submission" date="2009-04" db="EMBL/GenBank/DDBJ databases">
        <title>Yersinia pestis Nepal516A whole genome shotgun sequencing project.</title>
        <authorList>
            <person name="Plunkett G. III"/>
            <person name="Anderson B.D."/>
            <person name="Baumler D.J."/>
            <person name="Burland V."/>
            <person name="Cabot E.L."/>
            <person name="Glasner J.D."/>
            <person name="Mau B."/>
            <person name="Neeno-Eckwall E."/>
            <person name="Perna N.T."/>
            <person name="Munk A.C."/>
            <person name="Tapia R."/>
            <person name="Green L.D."/>
            <person name="Rogers Y.C."/>
            <person name="Detter J.C."/>
            <person name="Bruce D.C."/>
            <person name="Brettin T.S."/>
        </authorList>
    </citation>
    <scope>NUCLEOTIDE SEQUENCE [LARGE SCALE GENOMIC DNA]</scope>
    <source>
        <strain>Nepal516</strain>
    </source>
</reference>
<comment type="function">
    <text evidence="1">Catalyzes the reduction of hydroxylamine to form NH(3) and H(2)O.</text>
</comment>
<comment type="catalytic activity">
    <reaction evidence="1">
        <text>A + NH4(+) + H2O = hydroxylamine + AH2 + H(+)</text>
        <dbReference type="Rhea" id="RHEA:22052"/>
        <dbReference type="ChEBI" id="CHEBI:13193"/>
        <dbReference type="ChEBI" id="CHEBI:15377"/>
        <dbReference type="ChEBI" id="CHEBI:15378"/>
        <dbReference type="ChEBI" id="CHEBI:15429"/>
        <dbReference type="ChEBI" id="CHEBI:17499"/>
        <dbReference type="ChEBI" id="CHEBI:28938"/>
        <dbReference type="EC" id="1.7.99.1"/>
    </reaction>
</comment>
<comment type="cofactor">
    <cofactor evidence="1">
        <name>[2Fe-2S] cluster</name>
        <dbReference type="ChEBI" id="CHEBI:190135"/>
    </cofactor>
    <text evidence="1">Binds 1 [2Fe-2S] cluster.</text>
</comment>
<comment type="cofactor">
    <cofactor evidence="1">
        <name>hybrid [4Fe-2O-2S] cluster</name>
        <dbReference type="ChEBI" id="CHEBI:60519"/>
    </cofactor>
    <text evidence="1">Binds 1 hybrid [4Fe-2O-2S] cluster.</text>
</comment>
<comment type="subcellular location">
    <subcellularLocation>
        <location evidence="1">Cytoplasm</location>
    </subcellularLocation>
</comment>
<comment type="similarity">
    <text evidence="1">Belongs to the HCP family.</text>
</comment>
<keyword id="KW-0001">2Fe-2S</keyword>
<keyword id="KW-0963">Cytoplasm</keyword>
<keyword id="KW-0408">Iron</keyword>
<keyword id="KW-0411">Iron-sulfur</keyword>
<keyword id="KW-0479">Metal-binding</keyword>
<keyword id="KW-0560">Oxidoreductase</keyword>
<evidence type="ECO:0000255" key="1">
    <source>
        <dbReference type="HAMAP-Rule" id="MF_00069"/>
    </source>
</evidence>
<proteinExistence type="inferred from homology"/>
<sequence length="550" mass="60386">MFCVQCEQTIRTPAGNGCSYAQGMCGKTAETSDLQDLLVAVLQGLSAWALQARELGIIDSQIDSFAPRAFFSTLTNVNFDSDRIVEYAKDAILLRHSLAVRCRLLDSTITVDHPLAELQLVADDIPSLLQQSQQFALNNDKADVGDDIHGLRMLCLYGLKGAAAYMEHAHVLGQSDEQIYAEYHAYMAWLGTQPRDVDTLLNNAMGIGKMNFNVMAILDQGETQAYGDPQPTSVNVRPVAGKAILISGHDLKDLHMLLEQTQGTGINIYTHGEMLPAHGYPELKRYPHLVGNYGSGWQNQQTEFAKFPGPILMTSNCIIDPNVGNYGDRIWTRSIVGWPGVNHLDGDNFAPVIEQALGMAGFPYSELEHLITVGFGRQTLLNAADTVIDLVASKKLRHVFLVGGCDGSRTERSYFTDFARSVPQDCIIMTLACGKYRFNKLDFGTLEGLPRLLDVGQCNDAYAAIMLAVKLSEKLGCTVNDLPLSLVLSWFEQKAIVILLTLLSLGVKNIYTGPTAPGFLTDNLMAILYEKFGMQPITTVEQDMQAILGH</sequence>
<protein>
    <recommendedName>
        <fullName evidence="1">Hydroxylamine reductase</fullName>
        <ecNumber evidence="1">1.7.99.1</ecNumber>
    </recommendedName>
    <alternativeName>
        <fullName evidence="1">Hybrid-cluster protein</fullName>
        <shortName evidence="1">HCP</shortName>
    </alternativeName>
    <alternativeName>
        <fullName evidence="1">Prismane protein</fullName>
    </alternativeName>
</protein>
<name>HCP_YERPN</name>
<organism>
    <name type="scientific">Yersinia pestis bv. Antiqua (strain Nepal516)</name>
    <dbReference type="NCBI Taxonomy" id="377628"/>
    <lineage>
        <taxon>Bacteria</taxon>
        <taxon>Pseudomonadati</taxon>
        <taxon>Pseudomonadota</taxon>
        <taxon>Gammaproteobacteria</taxon>
        <taxon>Enterobacterales</taxon>
        <taxon>Yersiniaceae</taxon>
        <taxon>Yersinia</taxon>
    </lineage>
</organism>
<accession>Q1CGD1</accession>
<accession>C4GVX0</accession>
<gene>
    <name evidence="1" type="primary">hcp</name>
    <name type="ordered locus">YPN_2621</name>
    <name type="ORF">YP516_2956</name>
</gene>
<feature type="chain" id="PRO_1000009182" description="Hydroxylamine reductase">
    <location>
        <begin position="1"/>
        <end position="550"/>
    </location>
</feature>
<feature type="binding site" evidence="1">
    <location>
        <position position="3"/>
    </location>
    <ligand>
        <name>[2Fe-2S] cluster</name>
        <dbReference type="ChEBI" id="CHEBI:190135"/>
    </ligand>
</feature>
<feature type="binding site" evidence="1">
    <location>
        <position position="6"/>
    </location>
    <ligand>
        <name>[2Fe-2S] cluster</name>
        <dbReference type="ChEBI" id="CHEBI:190135"/>
    </ligand>
</feature>
<feature type="binding site" evidence="1">
    <location>
        <position position="18"/>
    </location>
    <ligand>
        <name>[2Fe-2S] cluster</name>
        <dbReference type="ChEBI" id="CHEBI:190135"/>
    </ligand>
</feature>
<feature type="binding site" evidence="1">
    <location>
        <position position="25"/>
    </location>
    <ligand>
        <name>[2Fe-2S] cluster</name>
        <dbReference type="ChEBI" id="CHEBI:190135"/>
    </ligand>
</feature>
<feature type="binding site" evidence="1">
    <location>
        <position position="249"/>
    </location>
    <ligand>
        <name>hybrid [4Fe-2O-2S] cluster</name>
        <dbReference type="ChEBI" id="CHEBI:60519"/>
    </ligand>
</feature>
<feature type="binding site" evidence="1">
    <location>
        <position position="273"/>
    </location>
    <ligand>
        <name>hybrid [4Fe-2O-2S] cluster</name>
        <dbReference type="ChEBI" id="CHEBI:60519"/>
    </ligand>
</feature>
<feature type="binding site" evidence="1">
    <location>
        <position position="317"/>
    </location>
    <ligand>
        <name>hybrid [4Fe-2O-2S] cluster</name>
        <dbReference type="ChEBI" id="CHEBI:60519"/>
    </ligand>
</feature>
<feature type="binding site" description="via persulfide group" evidence="1">
    <location>
        <position position="405"/>
    </location>
    <ligand>
        <name>hybrid [4Fe-2O-2S] cluster</name>
        <dbReference type="ChEBI" id="CHEBI:60519"/>
    </ligand>
</feature>
<feature type="binding site" evidence="1">
    <location>
        <position position="433"/>
    </location>
    <ligand>
        <name>hybrid [4Fe-2O-2S] cluster</name>
        <dbReference type="ChEBI" id="CHEBI:60519"/>
    </ligand>
</feature>
<feature type="binding site" evidence="1">
    <location>
        <position position="458"/>
    </location>
    <ligand>
        <name>hybrid [4Fe-2O-2S] cluster</name>
        <dbReference type="ChEBI" id="CHEBI:60519"/>
    </ligand>
</feature>
<feature type="binding site" evidence="1">
    <location>
        <position position="492"/>
    </location>
    <ligand>
        <name>hybrid [4Fe-2O-2S] cluster</name>
        <dbReference type="ChEBI" id="CHEBI:60519"/>
    </ligand>
</feature>
<feature type="binding site" evidence="1">
    <location>
        <position position="494"/>
    </location>
    <ligand>
        <name>hybrid [4Fe-2O-2S] cluster</name>
        <dbReference type="ChEBI" id="CHEBI:60519"/>
    </ligand>
</feature>
<feature type="modified residue" description="Cysteine persulfide" evidence="1">
    <location>
        <position position="405"/>
    </location>
</feature>